<organism>
    <name type="scientific">Mus musculus</name>
    <name type="common">Mouse</name>
    <dbReference type="NCBI Taxonomy" id="10090"/>
    <lineage>
        <taxon>Eukaryota</taxon>
        <taxon>Metazoa</taxon>
        <taxon>Chordata</taxon>
        <taxon>Craniata</taxon>
        <taxon>Vertebrata</taxon>
        <taxon>Euteleostomi</taxon>
        <taxon>Mammalia</taxon>
        <taxon>Eutheria</taxon>
        <taxon>Euarchontoglires</taxon>
        <taxon>Glires</taxon>
        <taxon>Rodentia</taxon>
        <taxon>Myomorpha</taxon>
        <taxon>Muroidea</taxon>
        <taxon>Muridae</taxon>
        <taxon>Murinae</taxon>
        <taxon>Mus</taxon>
        <taxon>Mus</taxon>
    </lineage>
</organism>
<proteinExistence type="evidence at protein level"/>
<dbReference type="EMBL" id="BC003862">
    <property type="protein sequence ID" value="AAH03862.1"/>
    <property type="molecule type" value="mRNA"/>
</dbReference>
<dbReference type="CCDS" id="CCDS27345.1"/>
<dbReference type="RefSeq" id="NP_542123.3">
    <property type="nucleotide sequence ID" value="NM_080556.3"/>
</dbReference>
<dbReference type="RefSeq" id="XP_036014728.1">
    <property type="nucleotide sequence ID" value="XM_036158835.1"/>
</dbReference>
<dbReference type="FunCoup" id="P58021">
    <property type="interactions" value="1989"/>
</dbReference>
<dbReference type="STRING" id="10090.ENSMUSP00000026624"/>
<dbReference type="GlyGen" id="P58021">
    <property type="glycosylation" value="1 site, 1 O-linked glycan (1 site)"/>
</dbReference>
<dbReference type="iPTMnet" id="P58021"/>
<dbReference type="PhosphoSitePlus" id="P58021"/>
<dbReference type="SwissPalm" id="P58021"/>
<dbReference type="jPOST" id="P58021"/>
<dbReference type="PaxDb" id="10090-ENSMUSP00000026624"/>
<dbReference type="PeptideAtlas" id="P58021"/>
<dbReference type="ProteomicsDB" id="262833"/>
<dbReference type="Pumba" id="P58021"/>
<dbReference type="Antibodypedia" id="970">
    <property type="antibodies" value="76 antibodies from 18 providers"/>
</dbReference>
<dbReference type="DNASU" id="68059"/>
<dbReference type="Ensembl" id="ENSMUST00000026624.11">
    <property type="protein sequence ID" value="ENSMUSP00000026624.5"/>
    <property type="gene ID" value="ENSMUSG00000025544.14"/>
</dbReference>
<dbReference type="GeneID" id="68059"/>
<dbReference type="KEGG" id="mmu:68059"/>
<dbReference type="UCSC" id="uc007vaw.1">
    <property type="organism name" value="mouse"/>
</dbReference>
<dbReference type="AGR" id="MGI:1915309"/>
<dbReference type="CTD" id="9375"/>
<dbReference type="MGI" id="MGI:1915309">
    <property type="gene designation" value="Tm9sf2"/>
</dbReference>
<dbReference type="VEuPathDB" id="HostDB:ENSMUSG00000025544"/>
<dbReference type="eggNOG" id="KOG1278">
    <property type="taxonomic scope" value="Eukaryota"/>
</dbReference>
<dbReference type="GeneTree" id="ENSGT00940000157563"/>
<dbReference type="InParanoid" id="P58021"/>
<dbReference type="OMA" id="KVYYMFG"/>
<dbReference type="OrthoDB" id="1666796at2759"/>
<dbReference type="PhylomeDB" id="P58021"/>
<dbReference type="TreeFam" id="TF300394"/>
<dbReference type="BioGRID-ORCS" id="68059">
    <property type="hits" value="12 hits in 79 CRISPR screens"/>
</dbReference>
<dbReference type="ChiTaRS" id="Tm9sf2">
    <property type="organism name" value="mouse"/>
</dbReference>
<dbReference type="PRO" id="PR:P58021"/>
<dbReference type="Proteomes" id="UP000000589">
    <property type="component" value="Chromosome 14"/>
</dbReference>
<dbReference type="RNAct" id="P58021">
    <property type="molecule type" value="protein"/>
</dbReference>
<dbReference type="Bgee" id="ENSMUSG00000025544">
    <property type="expression patterns" value="Expressed in paneth cell and 270 other cell types or tissues"/>
</dbReference>
<dbReference type="ExpressionAtlas" id="P58021">
    <property type="expression patterns" value="baseline and differential"/>
</dbReference>
<dbReference type="GO" id="GO:0010008">
    <property type="term" value="C:endosome membrane"/>
    <property type="evidence" value="ECO:0007669"/>
    <property type="project" value="UniProtKB-SubCell"/>
</dbReference>
<dbReference type="GO" id="GO:0005794">
    <property type="term" value="C:Golgi apparatus"/>
    <property type="evidence" value="ECO:0000250"/>
    <property type="project" value="UniProtKB"/>
</dbReference>
<dbReference type="GO" id="GO:0005815">
    <property type="term" value="C:microtubule organizing center"/>
    <property type="evidence" value="ECO:0007669"/>
    <property type="project" value="UniProtKB-SubCell"/>
</dbReference>
<dbReference type="GO" id="GO:0006672">
    <property type="term" value="P:ceramide metabolic process"/>
    <property type="evidence" value="ECO:0007669"/>
    <property type="project" value="Ensembl"/>
</dbReference>
<dbReference type="GO" id="GO:0006688">
    <property type="term" value="P:glycosphingolipid biosynthetic process"/>
    <property type="evidence" value="ECO:0007669"/>
    <property type="project" value="Ensembl"/>
</dbReference>
<dbReference type="GO" id="GO:0010908">
    <property type="term" value="P:regulation of heparan sulfate proteoglycan biosynthetic process"/>
    <property type="evidence" value="ECO:0007669"/>
    <property type="project" value="Ensembl"/>
</dbReference>
<dbReference type="InterPro" id="IPR004240">
    <property type="entry name" value="EMP70"/>
</dbReference>
<dbReference type="PANTHER" id="PTHR10766:SF111">
    <property type="entry name" value="TRANSMEMBRANE 9 SUPERFAMILY MEMBER 2"/>
    <property type="match status" value="1"/>
</dbReference>
<dbReference type="PANTHER" id="PTHR10766">
    <property type="entry name" value="TRANSMEMBRANE 9 SUPERFAMILY PROTEIN"/>
    <property type="match status" value="1"/>
</dbReference>
<dbReference type="Pfam" id="PF02990">
    <property type="entry name" value="EMP70"/>
    <property type="match status" value="1"/>
</dbReference>
<name>TM9S2_MOUSE</name>
<comment type="function">
    <text evidence="2">In the intracellular compartments, may function as a channel or small molecule transporter.</text>
</comment>
<comment type="subcellular location">
    <subcellularLocation>
        <location evidence="2">Endosome membrane</location>
        <topology evidence="3">Multi-pass membrane protein</topology>
    </subcellularLocation>
    <subcellularLocation>
        <location evidence="1">Golgi outpost</location>
    </subcellularLocation>
    <subcellularLocation>
        <location evidence="1">Cytoplasm</location>
        <location evidence="1">Cytoskeleton</location>
        <location evidence="1">Microtubule organizing center</location>
    </subcellularLocation>
    <text evidence="1">Localizes to the postsynaptic Golgi apparatus region, also named Golgi outpost, which shapes dendrite morphology by functioning as sites of acentrosomal microtubule nucleation.</text>
</comment>
<comment type="similarity">
    <text evidence="4">Belongs to the nonaspanin (TM9SF) (TC 9.A.2) family.</text>
</comment>
<protein>
    <recommendedName>
        <fullName>Transmembrane 9 superfamily member 2</fullName>
    </recommendedName>
</protein>
<evidence type="ECO:0000250" key="1">
    <source>
        <dbReference type="UniProtKB" id="Q66HG5"/>
    </source>
</evidence>
<evidence type="ECO:0000250" key="2">
    <source>
        <dbReference type="UniProtKB" id="Q99805"/>
    </source>
</evidence>
<evidence type="ECO:0000255" key="3"/>
<evidence type="ECO:0000305" key="4"/>
<feature type="signal peptide" evidence="3">
    <location>
        <begin position="1"/>
        <end position="28"/>
    </location>
</feature>
<feature type="chain" id="PRO_0000034366" description="Transmembrane 9 superfamily member 2">
    <location>
        <begin position="29"/>
        <end position="662"/>
    </location>
</feature>
<feature type="topological domain" description="Lumenal" evidence="3">
    <location>
        <begin position="29"/>
        <end position="299"/>
    </location>
</feature>
<feature type="transmembrane region" description="Helical" evidence="3">
    <location>
        <begin position="300"/>
        <end position="320"/>
    </location>
</feature>
<feature type="topological domain" description="Cytoplasmic" evidence="3">
    <location>
        <begin position="321"/>
        <end position="373"/>
    </location>
</feature>
<feature type="transmembrane region" description="Helical" evidence="3">
    <location>
        <begin position="374"/>
        <end position="394"/>
    </location>
</feature>
<feature type="topological domain" description="Lumenal" evidence="3">
    <location>
        <begin position="395"/>
        <end position="397"/>
    </location>
</feature>
<feature type="transmembrane region" description="Helical" evidence="3">
    <location>
        <begin position="398"/>
        <end position="418"/>
    </location>
</feature>
<feature type="topological domain" description="Cytoplasmic" evidence="3">
    <location>
        <begin position="419"/>
        <end position="436"/>
    </location>
</feature>
<feature type="transmembrane region" description="Helical" evidence="3">
    <location>
        <begin position="437"/>
        <end position="457"/>
    </location>
</feature>
<feature type="topological domain" description="Lumenal" evidence="3">
    <location>
        <begin position="458"/>
        <end position="465"/>
    </location>
</feature>
<feature type="transmembrane region" description="Helical" evidence="3">
    <location>
        <begin position="466"/>
        <end position="486"/>
    </location>
</feature>
<feature type="topological domain" description="Cytoplasmic" evidence="3">
    <location>
        <begin position="487"/>
        <end position="521"/>
    </location>
</feature>
<feature type="transmembrane region" description="Helical" evidence="3">
    <location>
        <begin position="522"/>
        <end position="542"/>
    </location>
</feature>
<feature type="topological domain" description="Lumenal" evidence="3">
    <location>
        <begin position="543"/>
        <end position="553"/>
    </location>
</feature>
<feature type="transmembrane region" description="Helical" evidence="3">
    <location>
        <begin position="554"/>
        <end position="574"/>
    </location>
</feature>
<feature type="topological domain" description="Cytoplasmic" evidence="3">
    <location>
        <begin position="575"/>
        <end position="590"/>
    </location>
</feature>
<feature type="transmembrane region" description="Helical" evidence="3">
    <location>
        <begin position="591"/>
        <end position="611"/>
    </location>
</feature>
<feature type="topological domain" description="Lumenal" evidence="3">
    <location>
        <begin position="612"/>
        <end position="630"/>
    </location>
</feature>
<feature type="transmembrane region" description="Helical" evidence="3">
    <location>
        <begin position="631"/>
        <end position="651"/>
    </location>
</feature>
<feature type="topological domain" description="Cytoplasmic" evidence="3">
    <location>
        <begin position="652"/>
        <end position="662"/>
    </location>
</feature>
<keyword id="KW-0963">Cytoplasm</keyword>
<keyword id="KW-0206">Cytoskeleton</keyword>
<keyword id="KW-0967">Endosome</keyword>
<keyword id="KW-0333">Golgi apparatus</keyword>
<keyword id="KW-0472">Membrane</keyword>
<keyword id="KW-1185">Reference proteome</keyword>
<keyword id="KW-0732">Signal</keyword>
<keyword id="KW-0812">Transmembrane</keyword>
<keyword id="KW-1133">Transmembrane helix</keyword>
<sequence length="662" mass="75330">MSSRPPASPPAQGSRLLLLSLLLLGTVPGPRPGSAFYLPGLAPVNFCAEEKSNECKADIELFVNRLDSVESVLPYEYTAFDFCQASEGKRPSENLGQVLFGERIEPSPYKFTFNKKETCKLVCTKTYNTEKAEDKQKLDFLKKSMLLNYQHHWIVDNMPVTWCYEVEDSQKFCNPGFPIGCYITDKGHAKDACVISSEFHERDTFYIFNHVDIKIYYHVVETGSMGARLVAAKLEPKSFKHTHIDKPDCSGPAMDISNKASGEIKIAYTYSISFEEEKNIRWASRWDYILESMPHTHIQWFSIMNSLVIVLFLSGMVAMIMLRTLHKDIARYNQMDSTEDAQEEFGWKLVHGDIFRPPRKGMLLSVFLGSGTQILIMTFVTLFFACLGFLSPANRGALMTCAVVLWVLLGTPAGYVAARFYKSFGGEKWKTNVLLTSFLCPGIVFADFFIMNLILWGEGSSAAIPFGTLVAILALWFCISVPLTFIGAYFGFKKNAIEHPVRTNQIPRQIPEQSFYTKPLPGIIMGGILPFGCIFIQLFFILNSIWSHQMYYMFGFLFLVFIILVITCSEATILLCYFHLCAEDYHWQWRSFLTSGFTAVYFLIYAIHYFFSKLQITGTASTILYFGYTMIMVLIFFLFTGTIGFFACFWFVTKIYSVVKVD</sequence>
<reference key="1">
    <citation type="journal article" date="2004" name="Genome Res.">
        <title>The status, quality, and expansion of the NIH full-length cDNA project: the Mammalian Gene Collection (MGC).</title>
        <authorList>
            <consortium name="The MGC Project Team"/>
        </authorList>
    </citation>
    <scope>NUCLEOTIDE SEQUENCE [LARGE SCALE MRNA]</scope>
    <source>
        <tissue>Mammary tumor</tissue>
    </source>
</reference>
<reference key="2">
    <citation type="journal article" date="2010" name="Cell">
        <title>A tissue-specific atlas of mouse protein phosphorylation and expression.</title>
        <authorList>
            <person name="Huttlin E.L."/>
            <person name="Jedrychowski M.P."/>
            <person name="Elias J.E."/>
            <person name="Goswami T."/>
            <person name="Rad R."/>
            <person name="Beausoleil S.A."/>
            <person name="Villen J."/>
            <person name="Haas W."/>
            <person name="Sowa M.E."/>
            <person name="Gygi S.P."/>
        </authorList>
    </citation>
    <scope>IDENTIFICATION BY MASS SPECTROMETRY [LARGE SCALE ANALYSIS]</scope>
    <source>
        <tissue>Brain</tissue>
        <tissue>Heart</tissue>
        <tissue>Kidney</tissue>
        <tissue>Liver</tissue>
        <tissue>Lung</tissue>
        <tissue>Pancreas</tissue>
        <tissue>Spleen</tissue>
        <tissue>Testis</tissue>
    </source>
</reference>
<gene>
    <name type="primary">Tm9sf2</name>
</gene>
<accession>P58021</accession>